<keyword id="KW-0004">4Fe-4S</keyword>
<keyword id="KW-0408">Iron</keyword>
<keyword id="KW-0411">Iron-sulfur</keyword>
<keyword id="KW-0456">Lyase</keyword>
<keyword id="KW-0479">Metal-binding</keyword>
<keyword id="KW-1185">Reference proteome</keyword>
<keyword id="KW-0949">S-adenosyl-L-methionine</keyword>
<keyword id="KW-0784">Thiamine biosynthesis</keyword>
<keyword id="KW-0862">Zinc</keyword>
<reference key="1">
    <citation type="submission" date="2007-10" db="EMBL/GenBank/DDBJ databases">
        <title>Complete sequence of Shewanella pealeana ATCC 700345.</title>
        <authorList>
            <consortium name="US DOE Joint Genome Institute"/>
            <person name="Copeland A."/>
            <person name="Lucas S."/>
            <person name="Lapidus A."/>
            <person name="Barry K."/>
            <person name="Glavina del Rio T."/>
            <person name="Dalin E."/>
            <person name="Tice H."/>
            <person name="Pitluck S."/>
            <person name="Chertkov O."/>
            <person name="Brettin T."/>
            <person name="Bruce D."/>
            <person name="Detter J.C."/>
            <person name="Han C."/>
            <person name="Schmutz J."/>
            <person name="Larimer F."/>
            <person name="Land M."/>
            <person name="Hauser L."/>
            <person name="Kyrpides N."/>
            <person name="Kim E."/>
            <person name="Zhao J.-S.Z."/>
            <person name="Manno D."/>
            <person name="Hawari J."/>
            <person name="Richardson P."/>
        </authorList>
    </citation>
    <scope>NUCLEOTIDE SEQUENCE [LARGE SCALE GENOMIC DNA]</scope>
    <source>
        <strain>ATCC 700345 / ANG-SQ1</strain>
    </source>
</reference>
<comment type="function">
    <text evidence="1">Catalyzes the synthesis of the hydroxymethylpyrimidine phosphate (HMP-P) moiety of thiamine from aminoimidazole ribotide (AIR) in a radical S-adenosyl-L-methionine (SAM)-dependent reaction.</text>
</comment>
<comment type="catalytic activity">
    <reaction evidence="1">
        <text>5-amino-1-(5-phospho-beta-D-ribosyl)imidazole + S-adenosyl-L-methionine = 4-amino-2-methyl-5-(phosphooxymethyl)pyrimidine + CO + 5'-deoxyadenosine + formate + L-methionine + 3 H(+)</text>
        <dbReference type="Rhea" id="RHEA:24840"/>
        <dbReference type="ChEBI" id="CHEBI:15378"/>
        <dbReference type="ChEBI" id="CHEBI:15740"/>
        <dbReference type="ChEBI" id="CHEBI:17245"/>
        <dbReference type="ChEBI" id="CHEBI:17319"/>
        <dbReference type="ChEBI" id="CHEBI:57844"/>
        <dbReference type="ChEBI" id="CHEBI:58354"/>
        <dbReference type="ChEBI" id="CHEBI:59789"/>
        <dbReference type="ChEBI" id="CHEBI:137981"/>
        <dbReference type="EC" id="4.1.99.17"/>
    </reaction>
</comment>
<comment type="cofactor">
    <cofactor evidence="1">
        <name>[4Fe-4S] cluster</name>
        <dbReference type="ChEBI" id="CHEBI:49883"/>
    </cofactor>
    <text evidence="1">Binds 1 [4Fe-4S] cluster per subunit. The cluster is coordinated with 3 cysteines and an exchangeable S-adenosyl-L-methionine.</text>
</comment>
<comment type="pathway">
    <text evidence="1">Cofactor biosynthesis; thiamine diphosphate biosynthesis.</text>
</comment>
<comment type="subunit">
    <text evidence="1">Homodimer.</text>
</comment>
<comment type="similarity">
    <text evidence="1">Belongs to the ThiC family.</text>
</comment>
<gene>
    <name evidence="1" type="primary">thiC</name>
    <name type="ordered locus">Spea_2383</name>
</gene>
<dbReference type="EC" id="4.1.99.17" evidence="1"/>
<dbReference type="EMBL" id="CP000851">
    <property type="protein sequence ID" value="ABV87703.1"/>
    <property type="molecule type" value="Genomic_DNA"/>
</dbReference>
<dbReference type="RefSeq" id="WP_012155617.1">
    <property type="nucleotide sequence ID" value="NC_009901.1"/>
</dbReference>
<dbReference type="SMR" id="A8H566"/>
<dbReference type="STRING" id="398579.Spea_2383"/>
<dbReference type="KEGG" id="spl:Spea_2383"/>
<dbReference type="eggNOG" id="COG0422">
    <property type="taxonomic scope" value="Bacteria"/>
</dbReference>
<dbReference type="HOGENOM" id="CLU_013181_2_1_6"/>
<dbReference type="UniPathway" id="UPA00060"/>
<dbReference type="Proteomes" id="UP000002608">
    <property type="component" value="Chromosome"/>
</dbReference>
<dbReference type="GO" id="GO:0005829">
    <property type="term" value="C:cytosol"/>
    <property type="evidence" value="ECO:0007669"/>
    <property type="project" value="TreeGrafter"/>
</dbReference>
<dbReference type="GO" id="GO:0051539">
    <property type="term" value="F:4 iron, 4 sulfur cluster binding"/>
    <property type="evidence" value="ECO:0007669"/>
    <property type="project" value="UniProtKB-KW"/>
</dbReference>
<dbReference type="GO" id="GO:0016830">
    <property type="term" value="F:carbon-carbon lyase activity"/>
    <property type="evidence" value="ECO:0007669"/>
    <property type="project" value="InterPro"/>
</dbReference>
<dbReference type="GO" id="GO:0008270">
    <property type="term" value="F:zinc ion binding"/>
    <property type="evidence" value="ECO:0007669"/>
    <property type="project" value="UniProtKB-UniRule"/>
</dbReference>
<dbReference type="GO" id="GO:0009228">
    <property type="term" value="P:thiamine biosynthetic process"/>
    <property type="evidence" value="ECO:0007669"/>
    <property type="project" value="UniProtKB-KW"/>
</dbReference>
<dbReference type="GO" id="GO:0009229">
    <property type="term" value="P:thiamine diphosphate biosynthetic process"/>
    <property type="evidence" value="ECO:0007669"/>
    <property type="project" value="UniProtKB-UniRule"/>
</dbReference>
<dbReference type="FunFam" id="3.20.20.540:FF:000001">
    <property type="entry name" value="Phosphomethylpyrimidine synthase"/>
    <property type="match status" value="1"/>
</dbReference>
<dbReference type="Gene3D" id="6.10.250.620">
    <property type="match status" value="1"/>
</dbReference>
<dbReference type="Gene3D" id="3.20.20.540">
    <property type="entry name" value="Radical SAM ThiC family, central domain"/>
    <property type="match status" value="1"/>
</dbReference>
<dbReference type="HAMAP" id="MF_00089">
    <property type="entry name" value="ThiC"/>
    <property type="match status" value="1"/>
</dbReference>
<dbReference type="InterPro" id="IPR037509">
    <property type="entry name" value="ThiC"/>
</dbReference>
<dbReference type="InterPro" id="IPR025747">
    <property type="entry name" value="ThiC-associated_dom"/>
</dbReference>
<dbReference type="InterPro" id="IPR038521">
    <property type="entry name" value="ThiC/Bza_core_dom"/>
</dbReference>
<dbReference type="InterPro" id="IPR002817">
    <property type="entry name" value="ThiC/BzaA/B"/>
</dbReference>
<dbReference type="NCBIfam" id="NF006763">
    <property type="entry name" value="PRK09284.1"/>
    <property type="match status" value="1"/>
</dbReference>
<dbReference type="NCBIfam" id="NF009895">
    <property type="entry name" value="PRK13352.1"/>
    <property type="match status" value="1"/>
</dbReference>
<dbReference type="NCBIfam" id="TIGR00190">
    <property type="entry name" value="thiC"/>
    <property type="match status" value="1"/>
</dbReference>
<dbReference type="PANTHER" id="PTHR30557:SF1">
    <property type="entry name" value="PHOSPHOMETHYLPYRIMIDINE SYNTHASE, CHLOROPLASTIC"/>
    <property type="match status" value="1"/>
</dbReference>
<dbReference type="PANTHER" id="PTHR30557">
    <property type="entry name" value="THIAMINE BIOSYNTHESIS PROTEIN THIC"/>
    <property type="match status" value="1"/>
</dbReference>
<dbReference type="Pfam" id="PF13667">
    <property type="entry name" value="ThiC-associated"/>
    <property type="match status" value="1"/>
</dbReference>
<dbReference type="Pfam" id="PF01964">
    <property type="entry name" value="ThiC_Rad_SAM"/>
    <property type="match status" value="1"/>
</dbReference>
<dbReference type="SFLD" id="SFLDF00407">
    <property type="entry name" value="phosphomethylpyrimidine_syntha"/>
    <property type="match status" value="1"/>
</dbReference>
<dbReference type="SFLD" id="SFLDG01114">
    <property type="entry name" value="phosphomethylpyrimidine_syntha"/>
    <property type="match status" value="1"/>
</dbReference>
<dbReference type="SFLD" id="SFLDS00113">
    <property type="entry name" value="Radical_SAM_Phosphomethylpyrim"/>
    <property type="match status" value="1"/>
</dbReference>
<organism>
    <name type="scientific">Shewanella pealeana (strain ATCC 700345 / ANG-SQ1)</name>
    <dbReference type="NCBI Taxonomy" id="398579"/>
    <lineage>
        <taxon>Bacteria</taxon>
        <taxon>Pseudomonadati</taxon>
        <taxon>Pseudomonadota</taxon>
        <taxon>Gammaproteobacteria</taxon>
        <taxon>Alteromonadales</taxon>
        <taxon>Shewanellaceae</taxon>
        <taxon>Shewanella</taxon>
    </lineage>
</organism>
<sequence length="667" mass="74607">MSNRRETRAQAQQFIDNLKPLQHPNSEKVYLEGSRPDLKVGMRQIHQSDTLVAGDEANPVFEANPPLKVYDCAGAYSDPDANIDVRKGLEKFRENWIEERGDTVQLTSASSGFTQQRLADDGLDHLRFESLLPPRRAKEGKRVTQLHYARQGIITPEMEYIAIRENMAKSEVTDPILTQKDKGESFGAVIGEPITAEFVRQEIARGRAIIPLNINHPEAEPMIIGRNFLVKVNANIGNSAVTSSIEEEVEKLVWSTRWGADTVMDLSTGRYIHETREWIIRNSPVPIGTVPIYQALEKVNGVAEDLNWETFRDTLIEQAEQGVDYFTIHAGVLLRYVPMTAKRLTGIVSRGGSIMAKWCLSHHKENFLYEHFREICEICAAYDVSLSLGDGMRPGSIADANDEAQFSELETLGKLVKVAWEYDVQTIIEGPGHIPMNLIKENMDKQLEVCDEAPFYTLGPQTTDIAPGYDHFTSGIGAAMIAWYGCAMLCYVTPKEHLGLPNKDDVKQGLIAYKIAAHAGDVAKGHPSAQIRDNALSKARFEFRWEDQYNLGLDPETARAYHDESLPQESAKVAHFCSMCGPKFCSMKITQEVRDYAAAQEREAEARVIDIKSATEYDSYTGSESDTAKRASQREQGMAQMSAEFKAKGAELYHEASHKQPDVALED</sequence>
<evidence type="ECO:0000255" key="1">
    <source>
        <dbReference type="HAMAP-Rule" id="MF_00089"/>
    </source>
</evidence>
<evidence type="ECO:0000256" key="2">
    <source>
        <dbReference type="SAM" id="MobiDB-lite"/>
    </source>
</evidence>
<name>THIC_SHEPA</name>
<feature type="chain" id="PRO_1000075447" description="Phosphomethylpyrimidine synthase">
    <location>
        <begin position="1"/>
        <end position="667"/>
    </location>
</feature>
<feature type="region of interest" description="Disordered" evidence="2">
    <location>
        <begin position="618"/>
        <end position="642"/>
    </location>
</feature>
<feature type="binding site" evidence="1">
    <location>
        <position position="235"/>
    </location>
    <ligand>
        <name>substrate</name>
    </ligand>
</feature>
<feature type="binding site" evidence="1">
    <location>
        <position position="264"/>
    </location>
    <ligand>
        <name>substrate</name>
    </ligand>
</feature>
<feature type="binding site" evidence="1">
    <location>
        <position position="293"/>
    </location>
    <ligand>
        <name>substrate</name>
    </ligand>
</feature>
<feature type="binding site" evidence="1">
    <location>
        <position position="329"/>
    </location>
    <ligand>
        <name>substrate</name>
    </ligand>
</feature>
<feature type="binding site" evidence="1">
    <location>
        <begin position="349"/>
        <end position="351"/>
    </location>
    <ligand>
        <name>substrate</name>
    </ligand>
</feature>
<feature type="binding site" evidence="1">
    <location>
        <begin position="390"/>
        <end position="393"/>
    </location>
    <ligand>
        <name>substrate</name>
    </ligand>
</feature>
<feature type="binding site" evidence="1">
    <location>
        <position position="429"/>
    </location>
    <ligand>
        <name>substrate</name>
    </ligand>
</feature>
<feature type="binding site" evidence="1">
    <location>
        <position position="433"/>
    </location>
    <ligand>
        <name>Zn(2+)</name>
        <dbReference type="ChEBI" id="CHEBI:29105"/>
    </ligand>
</feature>
<feature type="binding site" evidence="1">
    <location>
        <position position="456"/>
    </location>
    <ligand>
        <name>substrate</name>
    </ligand>
</feature>
<feature type="binding site" evidence="1">
    <location>
        <position position="497"/>
    </location>
    <ligand>
        <name>Zn(2+)</name>
        <dbReference type="ChEBI" id="CHEBI:29105"/>
    </ligand>
</feature>
<feature type="binding site" evidence="1">
    <location>
        <position position="577"/>
    </location>
    <ligand>
        <name>[4Fe-4S] cluster</name>
        <dbReference type="ChEBI" id="CHEBI:49883"/>
        <note>4Fe-4S-S-AdoMet</note>
    </ligand>
</feature>
<feature type="binding site" evidence="1">
    <location>
        <position position="580"/>
    </location>
    <ligand>
        <name>[4Fe-4S] cluster</name>
        <dbReference type="ChEBI" id="CHEBI:49883"/>
        <note>4Fe-4S-S-AdoMet</note>
    </ligand>
</feature>
<feature type="binding site" evidence="1">
    <location>
        <position position="585"/>
    </location>
    <ligand>
        <name>[4Fe-4S] cluster</name>
        <dbReference type="ChEBI" id="CHEBI:49883"/>
        <note>4Fe-4S-S-AdoMet</note>
    </ligand>
</feature>
<proteinExistence type="inferred from homology"/>
<accession>A8H566</accession>
<protein>
    <recommendedName>
        <fullName evidence="1">Phosphomethylpyrimidine synthase</fullName>
        <ecNumber evidence="1">4.1.99.17</ecNumber>
    </recommendedName>
    <alternativeName>
        <fullName evidence="1">Hydroxymethylpyrimidine phosphate synthase</fullName>
        <shortName evidence="1">HMP-P synthase</shortName>
        <shortName evidence="1">HMP-phosphate synthase</shortName>
        <shortName evidence="1">HMPP synthase</shortName>
    </alternativeName>
    <alternativeName>
        <fullName evidence="1">Thiamine biosynthesis protein ThiC</fullName>
    </alternativeName>
</protein>